<feature type="chain" id="PRO_1000127761" description="Putative 3-methyladenine DNA glycosylase">
    <location>
        <begin position="1"/>
        <end position="208"/>
    </location>
</feature>
<comment type="similarity">
    <text evidence="1">Belongs to the DNA glycosylase MPG family.</text>
</comment>
<keyword id="KW-0227">DNA damage</keyword>
<keyword id="KW-0234">DNA repair</keyword>
<keyword id="KW-0378">Hydrolase</keyword>
<protein>
    <recommendedName>
        <fullName evidence="1">Putative 3-methyladenine DNA glycosylase</fullName>
        <ecNumber evidence="1">3.2.2.-</ecNumber>
    </recommendedName>
</protein>
<organism>
    <name type="scientific">Prosthecochloris aestuarii (strain DSM 271 / SK 413)</name>
    <dbReference type="NCBI Taxonomy" id="290512"/>
    <lineage>
        <taxon>Bacteria</taxon>
        <taxon>Pseudomonadati</taxon>
        <taxon>Chlorobiota</taxon>
        <taxon>Chlorobiia</taxon>
        <taxon>Chlorobiales</taxon>
        <taxon>Chlorobiaceae</taxon>
        <taxon>Prosthecochloris</taxon>
    </lineage>
</organism>
<gene>
    <name type="ordered locus">Paes_1889</name>
</gene>
<proteinExistence type="inferred from homology"/>
<sequence length="208" mass="23051">MGRVIRDFFTQPTLVVAESLLGKILVHKPRKGFCYKGMIVETEAYLGNGDDACHASRKMTPRNSVMFRNPGTIYVYFTYGAHNLLNIVTEPEGTAGAVLIRAMEPVEGIELMKKNRKTDKVINLMNGPGKLTQAMEISLQQNGSSLHDTTLYLEEGTTIAGSCIETTPRVGISKSTDLLWRKYISDNPYVSKASPLPPTKKKRIVLES</sequence>
<evidence type="ECO:0000255" key="1">
    <source>
        <dbReference type="HAMAP-Rule" id="MF_00527"/>
    </source>
</evidence>
<dbReference type="EC" id="3.2.2.-" evidence="1"/>
<dbReference type="EMBL" id="CP001108">
    <property type="protein sequence ID" value="ACF46901.1"/>
    <property type="molecule type" value="Genomic_DNA"/>
</dbReference>
<dbReference type="RefSeq" id="WP_012506434.1">
    <property type="nucleotide sequence ID" value="NC_011059.1"/>
</dbReference>
<dbReference type="SMR" id="B4S4K5"/>
<dbReference type="STRING" id="290512.Paes_1889"/>
<dbReference type="KEGG" id="paa:Paes_1889"/>
<dbReference type="eggNOG" id="COG2094">
    <property type="taxonomic scope" value="Bacteria"/>
</dbReference>
<dbReference type="HOGENOM" id="CLU_060471_4_1_10"/>
<dbReference type="Proteomes" id="UP000002725">
    <property type="component" value="Chromosome"/>
</dbReference>
<dbReference type="GO" id="GO:0003905">
    <property type="term" value="F:alkylbase DNA N-glycosylase activity"/>
    <property type="evidence" value="ECO:0007669"/>
    <property type="project" value="InterPro"/>
</dbReference>
<dbReference type="GO" id="GO:0003677">
    <property type="term" value="F:DNA binding"/>
    <property type="evidence" value="ECO:0007669"/>
    <property type="project" value="InterPro"/>
</dbReference>
<dbReference type="GO" id="GO:0006284">
    <property type="term" value="P:base-excision repair"/>
    <property type="evidence" value="ECO:0007669"/>
    <property type="project" value="InterPro"/>
</dbReference>
<dbReference type="CDD" id="cd00540">
    <property type="entry name" value="AAG"/>
    <property type="match status" value="1"/>
</dbReference>
<dbReference type="FunFam" id="3.10.300.10:FF:000001">
    <property type="entry name" value="Putative 3-methyladenine DNA glycosylase"/>
    <property type="match status" value="1"/>
</dbReference>
<dbReference type="Gene3D" id="3.10.300.10">
    <property type="entry name" value="Methylpurine-DNA glycosylase (MPG)"/>
    <property type="match status" value="1"/>
</dbReference>
<dbReference type="HAMAP" id="MF_00527">
    <property type="entry name" value="3MGH"/>
    <property type="match status" value="1"/>
</dbReference>
<dbReference type="InterPro" id="IPR011034">
    <property type="entry name" value="Formyl_transferase-like_C_sf"/>
</dbReference>
<dbReference type="InterPro" id="IPR003180">
    <property type="entry name" value="MPG"/>
</dbReference>
<dbReference type="InterPro" id="IPR036995">
    <property type="entry name" value="MPG_sf"/>
</dbReference>
<dbReference type="NCBIfam" id="TIGR00567">
    <property type="entry name" value="3mg"/>
    <property type="match status" value="1"/>
</dbReference>
<dbReference type="NCBIfam" id="NF002003">
    <property type="entry name" value="PRK00802.1-3"/>
    <property type="match status" value="1"/>
</dbReference>
<dbReference type="PANTHER" id="PTHR10429">
    <property type="entry name" value="DNA-3-METHYLADENINE GLYCOSYLASE"/>
    <property type="match status" value="1"/>
</dbReference>
<dbReference type="PANTHER" id="PTHR10429:SF0">
    <property type="entry name" value="DNA-3-METHYLADENINE GLYCOSYLASE"/>
    <property type="match status" value="1"/>
</dbReference>
<dbReference type="Pfam" id="PF02245">
    <property type="entry name" value="Pur_DNA_glyco"/>
    <property type="match status" value="1"/>
</dbReference>
<dbReference type="SUPFAM" id="SSF50486">
    <property type="entry name" value="FMT C-terminal domain-like"/>
    <property type="match status" value="1"/>
</dbReference>
<name>3MGH_PROA2</name>
<accession>B4S4K5</accession>
<reference key="1">
    <citation type="submission" date="2008-06" db="EMBL/GenBank/DDBJ databases">
        <title>Complete sequence of chromosome of Prosthecochloris aestuarii DSM 271.</title>
        <authorList>
            <consortium name="US DOE Joint Genome Institute"/>
            <person name="Lucas S."/>
            <person name="Copeland A."/>
            <person name="Lapidus A."/>
            <person name="Glavina del Rio T."/>
            <person name="Dalin E."/>
            <person name="Tice H."/>
            <person name="Bruce D."/>
            <person name="Goodwin L."/>
            <person name="Pitluck S."/>
            <person name="Schmutz J."/>
            <person name="Larimer F."/>
            <person name="Land M."/>
            <person name="Hauser L."/>
            <person name="Kyrpides N."/>
            <person name="Anderson I."/>
            <person name="Liu Z."/>
            <person name="Li T."/>
            <person name="Zhao F."/>
            <person name="Overmann J."/>
            <person name="Bryant D.A."/>
            <person name="Richardson P."/>
        </authorList>
    </citation>
    <scope>NUCLEOTIDE SEQUENCE [LARGE SCALE GENOMIC DNA]</scope>
    <source>
        <strain>DSM 271 / SK 413</strain>
    </source>
</reference>